<comment type="catalytic activity">
    <reaction evidence="1">
        <text>GTP + H2O = 7,8-dihydroneopterin 3'-triphosphate + formate + H(+)</text>
        <dbReference type="Rhea" id="RHEA:17473"/>
        <dbReference type="ChEBI" id="CHEBI:15377"/>
        <dbReference type="ChEBI" id="CHEBI:15378"/>
        <dbReference type="ChEBI" id="CHEBI:15740"/>
        <dbReference type="ChEBI" id="CHEBI:37565"/>
        <dbReference type="ChEBI" id="CHEBI:58462"/>
        <dbReference type="EC" id="3.5.4.16"/>
    </reaction>
</comment>
<comment type="pathway">
    <text evidence="1">Cofactor biosynthesis; 7,8-dihydroneopterin triphosphate biosynthesis; 7,8-dihydroneopterin triphosphate from GTP: step 1/1.</text>
</comment>
<comment type="subunit">
    <text evidence="1">Homomer.</text>
</comment>
<comment type="similarity">
    <text evidence="1">Belongs to the GTP cyclohydrolase I family.</text>
</comment>
<evidence type="ECO:0000255" key="1">
    <source>
        <dbReference type="HAMAP-Rule" id="MF_00223"/>
    </source>
</evidence>
<sequence length="184" mass="20728">MDTQKIEAAVKMIIEAVGEDANREGLQETPARVARMYQEIFSGLGQTAEEHLSKSFEIIDDNMVVEKDIFFHTMCEHHFLPFYGRAHIAYIPDGRVAGLSKLARTVEVYSKKPQIQERLNIEVADALMEYLGAKGAFVVIEAEHMCMSMRGVRKPGTATLTTVARGLFETDKDLRDQAYRLMGL</sequence>
<name>GCH1_STRPJ</name>
<keyword id="KW-0342">GTP-binding</keyword>
<keyword id="KW-0378">Hydrolase</keyword>
<keyword id="KW-0479">Metal-binding</keyword>
<keyword id="KW-0547">Nucleotide-binding</keyword>
<keyword id="KW-0554">One-carbon metabolism</keyword>
<keyword id="KW-0862">Zinc</keyword>
<organism>
    <name type="scientific">Streptococcus pneumoniae (strain ATCC 700669 / Spain 23F-1)</name>
    <dbReference type="NCBI Taxonomy" id="561276"/>
    <lineage>
        <taxon>Bacteria</taxon>
        <taxon>Bacillati</taxon>
        <taxon>Bacillota</taxon>
        <taxon>Bacilli</taxon>
        <taxon>Lactobacillales</taxon>
        <taxon>Streptococcaceae</taxon>
        <taxon>Streptococcus</taxon>
    </lineage>
</organism>
<gene>
    <name evidence="1" type="primary">folE</name>
    <name type="ordered locus">SPN23F02800</name>
</gene>
<reference key="1">
    <citation type="journal article" date="2009" name="J. Bacteriol.">
        <title>Role of conjugative elements in the evolution of the multidrug-resistant pandemic clone Streptococcus pneumoniae Spain23F ST81.</title>
        <authorList>
            <person name="Croucher N.J."/>
            <person name="Walker D."/>
            <person name="Romero P."/>
            <person name="Lennard N."/>
            <person name="Paterson G.K."/>
            <person name="Bason N.C."/>
            <person name="Mitchell A.M."/>
            <person name="Quail M.A."/>
            <person name="Andrew P.W."/>
            <person name="Parkhill J."/>
            <person name="Bentley S.D."/>
            <person name="Mitchell T.J."/>
        </authorList>
    </citation>
    <scope>NUCLEOTIDE SEQUENCE [LARGE SCALE GENOMIC DNA]</scope>
    <source>
        <strain>ATCC 700669 / Spain 23F-1</strain>
    </source>
</reference>
<feature type="chain" id="PRO_1000124929" description="GTP cyclohydrolase 1">
    <location>
        <begin position="1"/>
        <end position="184"/>
    </location>
</feature>
<feature type="binding site" evidence="1">
    <location>
        <position position="75"/>
    </location>
    <ligand>
        <name>Zn(2+)</name>
        <dbReference type="ChEBI" id="CHEBI:29105"/>
    </ligand>
</feature>
<feature type="binding site" evidence="1">
    <location>
        <position position="78"/>
    </location>
    <ligand>
        <name>Zn(2+)</name>
        <dbReference type="ChEBI" id="CHEBI:29105"/>
    </ligand>
</feature>
<feature type="binding site" evidence="1">
    <location>
        <position position="146"/>
    </location>
    <ligand>
        <name>Zn(2+)</name>
        <dbReference type="ChEBI" id="CHEBI:29105"/>
    </ligand>
</feature>
<protein>
    <recommendedName>
        <fullName evidence="1">GTP cyclohydrolase 1</fullName>
        <ecNumber evidence="1">3.5.4.16</ecNumber>
    </recommendedName>
    <alternativeName>
        <fullName evidence="1">GTP cyclohydrolase I</fullName>
        <shortName evidence="1">GTP-CH-I</shortName>
    </alternativeName>
</protein>
<dbReference type="EC" id="3.5.4.16" evidence="1"/>
<dbReference type="EMBL" id="FM211187">
    <property type="protein sequence ID" value="CAR68138.1"/>
    <property type="molecule type" value="Genomic_DNA"/>
</dbReference>
<dbReference type="RefSeq" id="WP_000380917.1">
    <property type="nucleotide sequence ID" value="NC_011900.1"/>
</dbReference>
<dbReference type="SMR" id="B8ZL26"/>
<dbReference type="KEGG" id="sne:SPN23F02800"/>
<dbReference type="HOGENOM" id="CLU_049768_3_3_9"/>
<dbReference type="UniPathway" id="UPA00848">
    <property type="reaction ID" value="UER00151"/>
</dbReference>
<dbReference type="GO" id="GO:0005737">
    <property type="term" value="C:cytoplasm"/>
    <property type="evidence" value="ECO:0007669"/>
    <property type="project" value="TreeGrafter"/>
</dbReference>
<dbReference type="GO" id="GO:0005525">
    <property type="term" value="F:GTP binding"/>
    <property type="evidence" value="ECO:0007669"/>
    <property type="project" value="UniProtKB-KW"/>
</dbReference>
<dbReference type="GO" id="GO:0003934">
    <property type="term" value="F:GTP cyclohydrolase I activity"/>
    <property type="evidence" value="ECO:0007669"/>
    <property type="project" value="UniProtKB-UniRule"/>
</dbReference>
<dbReference type="GO" id="GO:0008270">
    <property type="term" value="F:zinc ion binding"/>
    <property type="evidence" value="ECO:0007669"/>
    <property type="project" value="UniProtKB-UniRule"/>
</dbReference>
<dbReference type="GO" id="GO:0006730">
    <property type="term" value="P:one-carbon metabolic process"/>
    <property type="evidence" value="ECO:0007669"/>
    <property type="project" value="UniProtKB-UniRule"/>
</dbReference>
<dbReference type="GO" id="GO:0006729">
    <property type="term" value="P:tetrahydrobiopterin biosynthetic process"/>
    <property type="evidence" value="ECO:0007669"/>
    <property type="project" value="TreeGrafter"/>
</dbReference>
<dbReference type="GO" id="GO:0046654">
    <property type="term" value="P:tetrahydrofolate biosynthetic process"/>
    <property type="evidence" value="ECO:0007669"/>
    <property type="project" value="UniProtKB-UniRule"/>
</dbReference>
<dbReference type="CDD" id="cd00642">
    <property type="entry name" value="GTP_cyclohydro1"/>
    <property type="match status" value="1"/>
</dbReference>
<dbReference type="FunFam" id="1.10.286.10:FF:000001">
    <property type="entry name" value="GTP cyclohydrolase 1"/>
    <property type="match status" value="1"/>
</dbReference>
<dbReference type="FunFam" id="3.30.1130.10:FF:000001">
    <property type="entry name" value="GTP cyclohydrolase 1"/>
    <property type="match status" value="1"/>
</dbReference>
<dbReference type="Gene3D" id="1.10.286.10">
    <property type="match status" value="1"/>
</dbReference>
<dbReference type="Gene3D" id="3.30.1130.10">
    <property type="match status" value="1"/>
</dbReference>
<dbReference type="HAMAP" id="MF_00223">
    <property type="entry name" value="FolE"/>
    <property type="match status" value="1"/>
</dbReference>
<dbReference type="InterPro" id="IPR043133">
    <property type="entry name" value="GTP-CH-I_C/QueF"/>
</dbReference>
<dbReference type="InterPro" id="IPR043134">
    <property type="entry name" value="GTP-CH-I_N"/>
</dbReference>
<dbReference type="InterPro" id="IPR001474">
    <property type="entry name" value="GTP_CycHdrlase_I"/>
</dbReference>
<dbReference type="InterPro" id="IPR018234">
    <property type="entry name" value="GTP_CycHdrlase_I_CS"/>
</dbReference>
<dbReference type="InterPro" id="IPR020602">
    <property type="entry name" value="GTP_CycHdrlase_I_dom"/>
</dbReference>
<dbReference type="NCBIfam" id="TIGR00063">
    <property type="entry name" value="folE"/>
    <property type="match status" value="1"/>
</dbReference>
<dbReference type="NCBIfam" id="NF006825">
    <property type="entry name" value="PRK09347.1-2"/>
    <property type="match status" value="1"/>
</dbReference>
<dbReference type="NCBIfam" id="NF006826">
    <property type="entry name" value="PRK09347.1-3"/>
    <property type="match status" value="1"/>
</dbReference>
<dbReference type="PANTHER" id="PTHR11109:SF7">
    <property type="entry name" value="GTP CYCLOHYDROLASE 1"/>
    <property type="match status" value="1"/>
</dbReference>
<dbReference type="PANTHER" id="PTHR11109">
    <property type="entry name" value="GTP CYCLOHYDROLASE I"/>
    <property type="match status" value="1"/>
</dbReference>
<dbReference type="Pfam" id="PF01227">
    <property type="entry name" value="GTP_cyclohydroI"/>
    <property type="match status" value="1"/>
</dbReference>
<dbReference type="SUPFAM" id="SSF55620">
    <property type="entry name" value="Tetrahydrobiopterin biosynthesis enzymes-like"/>
    <property type="match status" value="1"/>
</dbReference>
<dbReference type="PROSITE" id="PS00859">
    <property type="entry name" value="GTP_CYCLOHYDROL_1_1"/>
    <property type="match status" value="1"/>
</dbReference>
<dbReference type="PROSITE" id="PS00860">
    <property type="entry name" value="GTP_CYCLOHYDROL_1_2"/>
    <property type="match status" value="1"/>
</dbReference>
<accession>B8ZL26</accession>
<proteinExistence type="inferred from homology"/>